<proteinExistence type="inferred from homology"/>
<name>ASNS_MIMIV</name>
<sequence length="550" mass="63335">MCGIICFIQYGGQKIDLVSCLNCLDKLNNRGPDAQSYQVIELGDITIFLGFTRLAIMDTSEAGLQPFKDNNSNYSICNGEIYNYKNLAEKFNIEMQSQCDCEILLPLFNLRGFEGLLSDLDAEFATVIVDKYNSKLYAARDKYGVRPLYYGYNCEKGLIGFASELKALHSVMEYVEQVKPNQYVTIDLSFRPSIPFDLQNFVKLFQFTNYHEYYQSHKSLIDYHEPNIEQLQTSINHLLTEAVRKRLYADRQIGFLLSGGLDSSLIVAIATRLLGPTNIVCFSVGFEGSPDVAAAREVVKFLGIKNHHIVPFSVDIGLNAINDVIKTIETYDITTIRASTPQFIMAKYIQENTDIRVLLSGEGSDEIHGSYKYMRSAPNSQEFHKETIRLLEELYLFDNKRTDRTMAGNGLEVRVPFLDFNYVDFIMNIDPNLLMYKSDYIEKKIIRDAFKGYLPENILYRPKEAFSDAVSSKEINWYRSIQKITEEIYTDEKLQNSNYKFNKPEIKEALYYRDIFNSHYGGRDHIIPHYWLPRFQQNNVLDPSATILPI</sequence>
<evidence type="ECO:0000250" key="1"/>
<evidence type="ECO:0000255" key="2">
    <source>
        <dbReference type="PROSITE-ProRule" id="PRU00609"/>
    </source>
</evidence>
<accession>Q5UQE1</accession>
<keyword id="KW-0028">Amino-acid biosynthesis</keyword>
<keyword id="KW-0061">Asparagine biosynthesis</keyword>
<keyword id="KW-0067">ATP-binding</keyword>
<keyword id="KW-0315">Glutamine amidotransferase</keyword>
<keyword id="KW-0436">Ligase</keyword>
<keyword id="KW-0547">Nucleotide-binding</keyword>
<keyword id="KW-1185">Reference proteome</keyword>
<comment type="catalytic activity">
    <reaction>
        <text>L-aspartate + L-glutamine + ATP + H2O = L-asparagine + L-glutamate + AMP + diphosphate + H(+)</text>
        <dbReference type="Rhea" id="RHEA:12228"/>
        <dbReference type="ChEBI" id="CHEBI:15377"/>
        <dbReference type="ChEBI" id="CHEBI:15378"/>
        <dbReference type="ChEBI" id="CHEBI:29985"/>
        <dbReference type="ChEBI" id="CHEBI:29991"/>
        <dbReference type="ChEBI" id="CHEBI:30616"/>
        <dbReference type="ChEBI" id="CHEBI:33019"/>
        <dbReference type="ChEBI" id="CHEBI:58048"/>
        <dbReference type="ChEBI" id="CHEBI:58359"/>
        <dbReference type="ChEBI" id="CHEBI:456215"/>
        <dbReference type="EC" id="6.3.5.4"/>
    </reaction>
</comment>
<comment type="pathway">
    <text>Amino-acid biosynthesis; L-asparagine biosynthesis; L-asparagine from L-aspartate (L-Gln route): step 1/1.</text>
</comment>
<gene>
    <name type="ordered locus">MIMI_R475</name>
</gene>
<dbReference type="EC" id="6.3.5.4"/>
<dbReference type="EMBL" id="AY653733">
    <property type="protein sequence ID" value="AAV50741.1"/>
    <property type="molecule type" value="Genomic_DNA"/>
</dbReference>
<dbReference type="SMR" id="Q5UQE1"/>
<dbReference type="KEGG" id="vg:9925100"/>
<dbReference type="OrthoDB" id="3976at10239"/>
<dbReference type="UniPathway" id="UPA00134">
    <property type="reaction ID" value="UER00195"/>
</dbReference>
<dbReference type="Proteomes" id="UP000001134">
    <property type="component" value="Genome"/>
</dbReference>
<dbReference type="GO" id="GO:0004066">
    <property type="term" value="F:asparagine synthase (glutamine-hydrolyzing) activity"/>
    <property type="evidence" value="ECO:0007669"/>
    <property type="project" value="UniProtKB-EC"/>
</dbReference>
<dbReference type="GO" id="GO:0005524">
    <property type="term" value="F:ATP binding"/>
    <property type="evidence" value="ECO:0007669"/>
    <property type="project" value="UniProtKB-KW"/>
</dbReference>
<dbReference type="GO" id="GO:0070981">
    <property type="term" value="P:L-asparagine biosynthetic process"/>
    <property type="evidence" value="ECO:0007669"/>
    <property type="project" value="UniProtKB-UniPathway"/>
</dbReference>
<dbReference type="CDD" id="cd01991">
    <property type="entry name" value="Asn_synthase_B_C"/>
    <property type="match status" value="1"/>
</dbReference>
<dbReference type="CDD" id="cd00712">
    <property type="entry name" value="AsnB"/>
    <property type="match status" value="1"/>
</dbReference>
<dbReference type="Gene3D" id="3.60.20.10">
    <property type="entry name" value="Glutamine Phosphoribosylpyrophosphate, subunit 1, domain 1"/>
    <property type="match status" value="1"/>
</dbReference>
<dbReference type="Gene3D" id="3.40.50.620">
    <property type="entry name" value="HUPs"/>
    <property type="match status" value="1"/>
</dbReference>
<dbReference type="InterPro" id="IPR006426">
    <property type="entry name" value="Asn_synth_AEB"/>
</dbReference>
<dbReference type="InterPro" id="IPR001962">
    <property type="entry name" value="Asn_synthase"/>
</dbReference>
<dbReference type="InterPro" id="IPR050795">
    <property type="entry name" value="Asn_Synthetase"/>
</dbReference>
<dbReference type="InterPro" id="IPR033738">
    <property type="entry name" value="AsnB_N"/>
</dbReference>
<dbReference type="InterPro" id="IPR017932">
    <property type="entry name" value="GATase_2_dom"/>
</dbReference>
<dbReference type="InterPro" id="IPR029055">
    <property type="entry name" value="Ntn_hydrolases_N"/>
</dbReference>
<dbReference type="InterPro" id="IPR014729">
    <property type="entry name" value="Rossmann-like_a/b/a_fold"/>
</dbReference>
<dbReference type="NCBIfam" id="TIGR01536">
    <property type="entry name" value="asn_synth_AEB"/>
    <property type="match status" value="1"/>
</dbReference>
<dbReference type="PANTHER" id="PTHR11772">
    <property type="entry name" value="ASPARAGINE SYNTHETASE"/>
    <property type="match status" value="1"/>
</dbReference>
<dbReference type="PANTHER" id="PTHR11772:SF23">
    <property type="entry name" value="ASPARAGINE SYNTHETASE [GLUTAMINE-HYDROLYZING]"/>
    <property type="match status" value="1"/>
</dbReference>
<dbReference type="Pfam" id="PF00733">
    <property type="entry name" value="Asn_synthase"/>
    <property type="match status" value="1"/>
</dbReference>
<dbReference type="Pfam" id="PF13537">
    <property type="entry name" value="GATase_7"/>
    <property type="match status" value="1"/>
</dbReference>
<dbReference type="PIRSF" id="PIRSF001589">
    <property type="entry name" value="Asn_synthetase_glu-h"/>
    <property type="match status" value="1"/>
</dbReference>
<dbReference type="SUPFAM" id="SSF52402">
    <property type="entry name" value="Adenine nucleotide alpha hydrolases-like"/>
    <property type="match status" value="1"/>
</dbReference>
<dbReference type="SUPFAM" id="SSF56235">
    <property type="entry name" value="N-terminal nucleophile aminohydrolases (Ntn hydrolases)"/>
    <property type="match status" value="1"/>
</dbReference>
<dbReference type="PROSITE" id="PS51278">
    <property type="entry name" value="GATASE_TYPE_2"/>
    <property type="match status" value="1"/>
</dbReference>
<organism>
    <name type="scientific">Acanthamoeba polyphaga mimivirus</name>
    <name type="common">APMV</name>
    <dbReference type="NCBI Taxonomy" id="212035"/>
    <lineage>
        <taxon>Viruses</taxon>
        <taxon>Varidnaviria</taxon>
        <taxon>Bamfordvirae</taxon>
        <taxon>Nucleocytoviricota</taxon>
        <taxon>Megaviricetes</taxon>
        <taxon>Imitervirales</taxon>
        <taxon>Mimiviridae</taxon>
        <taxon>Megamimivirinae</taxon>
        <taxon>Mimivirus</taxon>
        <taxon>Mimivirus bradfordmassiliense</taxon>
    </lineage>
</organism>
<feature type="initiator methionine" description="Removed; by host" evidence="1">
    <location>
        <position position="1"/>
    </location>
</feature>
<feature type="chain" id="PRO_0000056930" description="Probable asparagine synthetase [glutamine-hydrolyzing]">
    <location>
        <begin position="2"/>
        <end position="550"/>
    </location>
</feature>
<feature type="domain" description="Glutamine amidotransferase type-2" evidence="2">
    <location>
        <begin position="2"/>
        <end position="189"/>
    </location>
</feature>
<feature type="domain" description="Asparagine synthetase">
    <location>
        <begin position="213"/>
        <end position="530"/>
    </location>
</feature>
<feature type="active site" description="For GATase activity" evidence="1">
    <location>
        <position position="2"/>
    </location>
</feature>
<feature type="binding site" evidence="1">
    <location>
        <begin position="53"/>
        <end position="57"/>
    </location>
    <ligand>
        <name>L-glutamine</name>
        <dbReference type="ChEBI" id="CHEBI:58359"/>
    </ligand>
</feature>
<feature type="binding site" evidence="1">
    <location>
        <begin position="78"/>
        <end position="80"/>
    </location>
    <ligand>
        <name>L-glutamine</name>
        <dbReference type="ChEBI" id="CHEBI:58359"/>
    </ligand>
</feature>
<feature type="binding site" evidence="1">
    <location>
        <position position="100"/>
    </location>
    <ligand>
        <name>L-glutamine</name>
        <dbReference type="ChEBI" id="CHEBI:58359"/>
    </ligand>
</feature>
<feature type="binding site" evidence="1">
    <location>
        <position position="256"/>
    </location>
    <ligand>
        <name>ATP</name>
        <dbReference type="ChEBI" id="CHEBI:30616"/>
    </ligand>
</feature>
<feature type="binding site" evidence="1">
    <location>
        <position position="284"/>
    </location>
    <ligand>
        <name>ATP</name>
        <dbReference type="ChEBI" id="CHEBI:30616"/>
    </ligand>
</feature>
<feature type="binding site" evidence="1">
    <location>
        <begin position="360"/>
        <end position="361"/>
    </location>
    <ligand>
        <name>ATP</name>
        <dbReference type="ChEBI" id="CHEBI:30616"/>
    </ligand>
</feature>
<feature type="site" description="Important for beta-aspartyl-AMP intermediate formation" evidence="1">
    <location>
        <position position="362"/>
    </location>
</feature>
<protein>
    <recommendedName>
        <fullName>Probable asparagine synthetase [glutamine-hydrolyzing]</fullName>
        <ecNumber>6.3.5.4</ecNumber>
    </recommendedName>
    <alternativeName>
        <fullName>Glutamine-dependent asparagine synthetase</fullName>
    </alternativeName>
</protein>
<reference key="1">
    <citation type="journal article" date="2004" name="Science">
        <title>The 1.2-megabase genome sequence of Mimivirus.</title>
        <authorList>
            <person name="Raoult D."/>
            <person name="Audic S."/>
            <person name="Robert C."/>
            <person name="Abergel C."/>
            <person name="Renesto P."/>
            <person name="Ogata H."/>
            <person name="La Scola B."/>
            <person name="Susan M."/>
            <person name="Claverie J.-M."/>
        </authorList>
    </citation>
    <scope>NUCLEOTIDE SEQUENCE [LARGE SCALE GENOMIC DNA]</scope>
    <source>
        <strain>Rowbotham-Bradford</strain>
    </source>
</reference>
<organismHost>
    <name type="scientific">Acanthamoeba polyphaga</name>
    <name type="common">Amoeba</name>
    <dbReference type="NCBI Taxonomy" id="5757"/>
</organismHost>